<accession>P0C8C0</accession>
<keyword id="KW-0903">Direct protein sequencing</keyword>
<keyword id="KW-0528">Neurotoxin</keyword>
<keyword id="KW-0964">Secreted</keyword>
<keyword id="KW-0800">Toxin</keyword>
<feature type="chain" id="PRO_0000352856" description="Scolopendra 5848.46 Da toxin">
    <location>
        <begin position="1"/>
        <end position="19" status="greater than"/>
    </location>
</feature>
<feature type="non-terminal residue">
    <location>
        <position position="19"/>
    </location>
</feature>
<sequence>EQLIKKDVXHKDXFAXGSE</sequence>
<reference key="1">
    <citation type="journal article" date="2007" name="Toxicon">
        <title>Venomic analyses of Scolopendra viridicornis nigra and Scolopendra angulata (Centipede, Scolopendromorpha): shedding light on venoms from a neglected group.</title>
        <authorList>
            <person name="Rates B."/>
            <person name="Bemquerer M.P."/>
            <person name="Richardson M."/>
            <person name="Borges M.H."/>
            <person name="Morales R.A.V."/>
            <person name="De Lima M.E."/>
            <person name="Pimenta A.M.C."/>
        </authorList>
    </citation>
    <scope>PROTEIN SEQUENCE</scope>
    <scope>MASS SPECTROMETRY</scope>
    <scope>SUBCELLULAR LOCATION</scope>
    <source>
        <tissue>Venom</tissue>
    </source>
</reference>
<organism>
    <name type="scientific">Scolopendra angulata</name>
    <name type="common">Barbados giant red centipede</name>
    <dbReference type="NCBI Taxonomy" id="486498"/>
    <lineage>
        <taxon>Eukaryota</taxon>
        <taxon>Metazoa</taxon>
        <taxon>Ecdysozoa</taxon>
        <taxon>Arthropoda</taxon>
        <taxon>Myriapoda</taxon>
        <taxon>Chilopoda</taxon>
        <taxon>Pleurostigmophora</taxon>
        <taxon>Scolopendromorpha</taxon>
        <taxon>Scolopendridae</taxon>
        <taxon>Scolopendra</taxon>
    </lineage>
</organism>
<proteinExistence type="evidence at protein level"/>
<name>STX3A_SCOAN</name>
<comment type="subcellular location">
    <subcellularLocation>
        <location evidence="1">Secreted</location>
    </subcellularLocation>
</comment>
<comment type="tissue specificity">
    <text evidence="3">Expressed by the venom gland.</text>
</comment>
<comment type="mass spectrometry"/>
<comment type="similarity">
    <text evidence="2">Belongs to the scolopendra toxin 3 family.</text>
</comment>
<evidence type="ECO:0000269" key="1">
    <source>
    </source>
</evidence>
<evidence type="ECO:0000305" key="2"/>
<evidence type="ECO:0000305" key="3">
    <source>
    </source>
</evidence>
<dbReference type="GO" id="GO:0005576">
    <property type="term" value="C:extracellular region"/>
    <property type="evidence" value="ECO:0007669"/>
    <property type="project" value="UniProtKB-SubCell"/>
</dbReference>
<dbReference type="GO" id="GO:0090729">
    <property type="term" value="F:toxin activity"/>
    <property type="evidence" value="ECO:0007669"/>
    <property type="project" value="UniProtKB-KW"/>
</dbReference>
<protein>
    <recommendedName>
        <fullName>Scolopendra 5848.46 Da toxin</fullName>
    </recommendedName>
</protein>